<protein>
    <recommendedName>
        <fullName evidence="1">2-C-methyl-D-erythritol 4-phosphate cytidylyltransferase</fullName>
        <ecNumber evidence="1">2.7.7.60</ecNumber>
    </recommendedName>
    <alternativeName>
        <fullName evidence="1">4-diphosphocytidyl-2C-methyl-D-erythritol synthase</fullName>
    </alternativeName>
    <alternativeName>
        <fullName evidence="1">MEP cytidylyltransferase</fullName>
        <shortName evidence="1">MCT</shortName>
    </alternativeName>
</protein>
<accession>Q87DY4</accession>
<name>ISPD_XYLFT</name>
<comment type="function">
    <text evidence="1">Catalyzes the formation of 4-diphosphocytidyl-2-C-methyl-D-erythritol from CTP and 2-C-methyl-D-erythritol 4-phosphate (MEP).</text>
</comment>
<comment type="catalytic activity">
    <reaction evidence="1">
        <text>2-C-methyl-D-erythritol 4-phosphate + CTP + H(+) = 4-CDP-2-C-methyl-D-erythritol + diphosphate</text>
        <dbReference type="Rhea" id="RHEA:13429"/>
        <dbReference type="ChEBI" id="CHEBI:15378"/>
        <dbReference type="ChEBI" id="CHEBI:33019"/>
        <dbReference type="ChEBI" id="CHEBI:37563"/>
        <dbReference type="ChEBI" id="CHEBI:57823"/>
        <dbReference type="ChEBI" id="CHEBI:58262"/>
        <dbReference type="EC" id="2.7.7.60"/>
    </reaction>
</comment>
<comment type="pathway">
    <text evidence="1">Isoprenoid biosynthesis; isopentenyl diphosphate biosynthesis via DXP pathway; isopentenyl diphosphate from 1-deoxy-D-xylulose 5-phosphate: step 2/6.</text>
</comment>
<comment type="similarity">
    <text evidence="1">Belongs to the IspD/TarI cytidylyltransferase family. IspD subfamily.</text>
</comment>
<gene>
    <name evidence="1" type="primary">ispD</name>
    <name type="ordered locus">PD_0545</name>
</gene>
<reference key="1">
    <citation type="journal article" date="2003" name="J. Bacteriol.">
        <title>Comparative analyses of the complete genome sequences of Pierce's disease and citrus variegated chlorosis strains of Xylella fastidiosa.</title>
        <authorList>
            <person name="Van Sluys M.A."/>
            <person name="de Oliveira M.C."/>
            <person name="Monteiro-Vitorello C.B."/>
            <person name="Miyaki C.Y."/>
            <person name="Furlan L.R."/>
            <person name="Camargo L.E.A."/>
            <person name="da Silva A.C.R."/>
            <person name="Moon D.H."/>
            <person name="Takita M.A."/>
            <person name="Lemos E.G.M."/>
            <person name="Machado M.A."/>
            <person name="Ferro M.I.T."/>
            <person name="da Silva F.R."/>
            <person name="Goldman M.H.S."/>
            <person name="Goldman G.H."/>
            <person name="Lemos M.V.F."/>
            <person name="El-Dorry H."/>
            <person name="Tsai S.M."/>
            <person name="Carrer H."/>
            <person name="Carraro D.M."/>
            <person name="de Oliveira R.C."/>
            <person name="Nunes L.R."/>
            <person name="Siqueira W.J."/>
            <person name="Coutinho L.L."/>
            <person name="Kimura E.T."/>
            <person name="Ferro E.S."/>
            <person name="Harakava R."/>
            <person name="Kuramae E.E."/>
            <person name="Marino C.L."/>
            <person name="Giglioti E."/>
            <person name="Abreu I.L."/>
            <person name="Alves L.M.C."/>
            <person name="do Amaral A.M."/>
            <person name="Baia G.S."/>
            <person name="Blanco S.R."/>
            <person name="Brito M.S."/>
            <person name="Cannavan F.S."/>
            <person name="Celestino A.V."/>
            <person name="da Cunha A.F."/>
            <person name="Fenille R.C."/>
            <person name="Ferro J.A."/>
            <person name="Formighieri E.F."/>
            <person name="Kishi L.T."/>
            <person name="Leoni S.G."/>
            <person name="Oliveira A.R."/>
            <person name="Rosa V.E. Jr."/>
            <person name="Sassaki F.T."/>
            <person name="Sena J.A.D."/>
            <person name="de Souza A.A."/>
            <person name="Truffi D."/>
            <person name="Tsukumo F."/>
            <person name="Yanai G.M."/>
            <person name="Zaros L.G."/>
            <person name="Civerolo E.L."/>
            <person name="Simpson A.J.G."/>
            <person name="Almeida N.F. Jr."/>
            <person name="Setubal J.C."/>
            <person name="Kitajima J.P."/>
        </authorList>
    </citation>
    <scope>NUCLEOTIDE SEQUENCE [LARGE SCALE GENOMIC DNA]</scope>
    <source>
        <strain>Temecula1 / ATCC 700964</strain>
    </source>
</reference>
<dbReference type="EC" id="2.7.7.60" evidence="1"/>
<dbReference type="EMBL" id="AE009442">
    <property type="protein sequence ID" value="AAO28418.1"/>
    <property type="molecule type" value="Genomic_DNA"/>
</dbReference>
<dbReference type="SMR" id="Q87DY4"/>
<dbReference type="KEGG" id="xft:PD_0545"/>
<dbReference type="HOGENOM" id="CLU_061281_3_1_6"/>
<dbReference type="UniPathway" id="UPA00056">
    <property type="reaction ID" value="UER00093"/>
</dbReference>
<dbReference type="Proteomes" id="UP000002516">
    <property type="component" value="Chromosome"/>
</dbReference>
<dbReference type="GO" id="GO:0050518">
    <property type="term" value="F:2-C-methyl-D-erythritol 4-phosphate cytidylyltransferase activity"/>
    <property type="evidence" value="ECO:0007669"/>
    <property type="project" value="UniProtKB-UniRule"/>
</dbReference>
<dbReference type="GO" id="GO:0019288">
    <property type="term" value="P:isopentenyl diphosphate biosynthetic process, methylerythritol 4-phosphate pathway"/>
    <property type="evidence" value="ECO:0007669"/>
    <property type="project" value="UniProtKB-UniRule"/>
</dbReference>
<dbReference type="CDD" id="cd02516">
    <property type="entry name" value="CDP-ME_synthetase"/>
    <property type="match status" value="1"/>
</dbReference>
<dbReference type="FunFam" id="3.90.550.10:FF:000003">
    <property type="entry name" value="2-C-methyl-D-erythritol 4-phosphate cytidylyltransferase"/>
    <property type="match status" value="1"/>
</dbReference>
<dbReference type="Gene3D" id="3.90.550.10">
    <property type="entry name" value="Spore Coat Polysaccharide Biosynthesis Protein SpsA, Chain A"/>
    <property type="match status" value="1"/>
</dbReference>
<dbReference type="HAMAP" id="MF_00108">
    <property type="entry name" value="IspD"/>
    <property type="match status" value="1"/>
</dbReference>
<dbReference type="InterPro" id="IPR001228">
    <property type="entry name" value="IspD"/>
</dbReference>
<dbReference type="InterPro" id="IPR034683">
    <property type="entry name" value="IspD/TarI"/>
</dbReference>
<dbReference type="InterPro" id="IPR050088">
    <property type="entry name" value="IspD/TarI_cytidylyltransf_bact"/>
</dbReference>
<dbReference type="InterPro" id="IPR018294">
    <property type="entry name" value="ISPD_synthase_CS"/>
</dbReference>
<dbReference type="InterPro" id="IPR029044">
    <property type="entry name" value="Nucleotide-diphossugar_trans"/>
</dbReference>
<dbReference type="NCBIfam" id="TIGR00453">
    <property type="entry name" value="ispD"/>
    <property type="match status" value="1"/>
</dbReference>
<dbReference type="PANTHER" id="PTHR32125">
    <property type="entry name" value="2-C-METHYL-D-ERYTHRITOL 4-PHOSPHATE CYTIDYLYLTRANSFERASE, CHLOROPLASTIC"/>
    <property type="match status" value="1"/>
</dbReference>
<dbReference type="PANTHER" id="PTHR32125:SF4">
    <property type="entry name" value="2-C-METHYL-D-ERYTHRITOL 4-PHOSPHATE CYTIDYLYLTRANSFERASE, CHLOROPLASTIC"/>
    <property type="match status" value="1"/>
</dbReference>
<dbReference type="Pfam" id="PF01128">
    <property type="entry name" value="IspD"/>
    <property type="match status" value="1"/>
</dbReference>
<dbReference type="SUPFAM" id="SSF53448">
    <property type="entry name" value="Nucleotide-diphospho-sugar transferases"/>
    <property type="match status" value="1"/>
</dbReference>
<dbReference type="PROSITE" id="PS01295">
    <property type="entry name" value="ISPD"/>
    <property type="match status" value="1"/>
</dbReference>
<sequence length="231" mass="24767">MSVGVWAVIPAAGRGVRFGSPVPKQYLPVVGRPLIVYTLEALAAHPAVCGLMVVVAEGDLAWSGWTELAGKPLLTCSGGVTRAASVLSGLLALPQVVHADDFVLVHDAARPNVALSDLERLLEAGCAHPVGAILAVPVRDTLKRAGSDGSIDGTEPRERLWRAFTPQLFRRSQLVRGLQVAAADGIEMTDEAMVMERQGLRPLLVECAESNFKITTPDDLVRFEFELARRV</sequence>
<proteinExistence type="inferred from homology"/>
<evidence type="ECO:0000255" key="1">
    <source>
        <dbReference type="HAMAP-Rule" id="MF_00108"/>
    </source>
</evidence>
<keyword id="KW-0414">Isoprene biosynthesis</keyword>
<keyword id="KW-0548">Nucleotidyltransferase</keyword>
<keyword id="KW-1185">Reference proteome</keyword>
<keyword id="KW-0808">Transferase</keyword>
<organism>
    <name type="scientific">Xylella fastidiosa (strain Temecula1 / ATCC 700964)</name>
    <dbReference type="NCBI Taxonomy" id="183190"/>
    <lineage>
        <taxon>Bacteria</taxon>
        <taxon>Pseudomonadati</taxon>
        <taxon>Pseudomonadota</taxon>
        <taxon>Gammaproteobacteria</taxon>
        <taxon>Lysobacterales</taxon>
        <taxon>Lysobacteraceae</taxon>
        <taxon>Xylella</taxon>
    </lineage>
</organism>
<feature type="chain" id="PRO_0000075652" description="2-C-methyl-D-erythritol 4-phosphate cytidylyltransferase">
    <location>
        <begin position="1"/>
        <end position="231"/>
    </location>
</feature>
<feature type="site" description="Transition state stabilizer" evidence="1">
    <location>
        <position position="17"/>
    </location>
</feature>
<feature type="site" description="Transition state stabilizer" evidence="1">
    <location>
        <position position="24"/>
    </location>
</feature>
<feature type="site" description="Positions MEP for the nucleophilic attack" evidence="1">
    <location>
        <position position="157"/>
    </location>
</feature>
<feature type="site" description="Positions MEP for the nucleophilic attack" evidence="1">
    <location>
        <position position="213"/>
    </location>
</feature>